<sequence length="61" mass="7133">MNPIILKKDGKLAEITLNRPEVHNMFSMATLTRGFAEKVVTMLEKRRRNSTEIKFLCRHAF</sequence>
<accession>O28512</accession>
<reference key="1">
    <citation type="journal article" date="1997" name="Nature">
        <title>The complete genome sequence of the hyperthermophilic, sulphate-reducing archaeon Archaeoglobus fulgidus.</title>
        <authorList>
            <person name="Klenk H.-P."/>
            <person name="Clayton R.A."/>
            <person name="Tomb J.-F."/>
            <person name="White O."/>
            <person name="Nelson K.E."/>
            <person name="Ketchum K.A."/>
            <person name="Dodson R.J."/>
            <person name="Gwinn M.L."/>
            <person name="Hickey E.K."/>
            <person name="Peterson J.D."/>
            <person name="Richardson D.L."/>
            <person name="Kerlavage A.R."/>
            <person name="Graham D.E."/>
            <person name="Kyrpides N.C."/>
            <person name="Fleischmann R.D."/>
            <person name="Quackenbush J."/>
            <person name="Lee N.H."/>
            <person name="Sutton G.G."/>
            <person name="Gill S.R."/>
            <person name="Kirkness E.F."/>
            <person name="Dougherty B.A."/>
            <person name="McKenney K."/>
            <person name="Adams M.D."/>
            <person name="Loftus B.J."/>
            <person name="Peterson S.N."/>
            <person name="Reich C.I."/>
            <person name="McNeil L.K."/>
            <person name="Badger J.H."/>
            <person name="Glodek A."/>
            <person name="Zhou L."/>
            <person name="Overbeek R."/>
            <person name="Gocayne J.D."/>
            <person name="Weidman J.F."/>
            <person name="McDonald L.A."/>
            <person name="Utterback T.R."/>
            <person name="Cotton M.D."/>
            <person name="Spriggs T."/>
            <person name="Artiach P."/>
            <person name="Kaine B.P."/>
            <person name="Sykes S.M."/>
            <person name="Sadow P.W."/>
            <person name="D'Andrea K.P."/>
            <person name="Bowman C."/>
            <person name="Fujii C."/>
            <person name="Garland S.A."/>
            <person name="Mason T.M."/>
            <person name="Olsen G.J."/>
            <person name="Fraser C.M."/>
            <person name="Smith H.O."/>
            <person name="Woese C.R."/>
            <person name="Venter J.C."/>
        </authorList>
    </citation>
    <scope>NUCLEOTIDE SEQUENCE [LARGE SCALE GENOMIC DNA]</scope>
    <source>
        <strain>ATCC 49558 / DSM 4304 / JCM 9628 / NBRC 100126 / VC-16</strain>
    </source>
</reference>
<protein>
    <recommendedName>
        <fullName>Uncharacterized protein AF_1762</fullName>
    </recommendedName>
</protein>
<keyword id="KW-1185">Reference proteome</keyword>
<feature type="chain" id="PRO_0000128056" description="Uncharacterized protein AF_1762">
    <location>
        <begin position="1"/>
        <end position="61"/>
    </location>
</feature>
<proteinExistence type="predicted"/>
<name>Y1762_ARCFU</name>
<dbReference type="EMBL" id="AE000782">
    <property type="protein sequence ID" value="AAB89494.1"/>
    <property type="molecule type" value="Genomic_DNA"/>
</dbReference>
<dbReference type="PIR" id="A69470">
    <property type="entry name" value="A69470"/>
</dbReference>
<dbReference type="SMR" id="O28512"/>
<dbReference type="PaxDb" id="224325-AF_1762"/>
<dbReference type="EnsemblBacteria" id="AAB89494">
    <property type="protein sequence ID" value="AAB89494"/>
    <property type="gene ID" value="AF_1762"/>
</dbReference>
<dbReference type="KEGG" id="afu:AF_1762"/>
<dbReference type="HOGENOM" id="CLU_2911285_0_0_2"/>
<dbReference type="Proteomes" id="UP000002199">
    <property type="component" value="Chromosome"/>
</dbReference>
<dbReference type="InterPro" id="IPR029045">
    <property type="entry name" value="ClpP/crotonase-like_dom_sf"/>
</dbReference>
<dbReference type="SUPFAM" id="SSF52096">
    <property type="entry name" value="ClpP/crotonase"/>
    <property type="match status" value="1"/>
</dbReference>
<gene>
    <name type="ordered locus">AF_1762</name>
</gene>
<organism>
    <name type="scientific">Archaeoglobus fulgidus (strain ATCC 49558 / DSM 4304 / JCM 9628 / NBRC 100126 / VC-16)</name>
    <dbReference type="NCBI Taxonomy" id="224325"/>
    <lineage>
        <taxon>Archaea</taxon>
        <taxon>Methanobacteriati</taxon>
        <taxon>Methanobacteriota</taxon>
        <taxon>Archaeoglobi</taxon>
        <taxon>Archaeoglobales</taxon>
        <taxon>Archaeoglobaceae</taxon>
        <taxon>Archaeoglobus</taxon>
    </lineage>
</organism>